<evidence type="ECO:0000255" key="1">
    <source>
        <dbReference type="HAMAP-Rule" id="MF_01315"/>
    </source>
</evidence>
<evidence type="ECO:0000256" key="2">
    <source>
        <dbReference type="SAM" id="MobiDB-lite"/>
    </source>
</evidence>
<evidence type="ECO:0000305" key="3"/>
<dbReference type="EMBL" id="CP000414">
    <property type="protein sequence ID" value="ABJ61350.1"/>
    <property type="molecule type" value="Genomic_DNA"/>
</dbReference>
<dbReference type="RefSeq" id="WP_002816010.1">
    <property type="nucleotide sequence ID" value="NC_008531.1"/>
</dbReference>
<dbReference type="SMR" id="Q03ZM2"/>
<dbReference type="EnsemblBacteria" id="ABJ61350">
    <property type="protein sequence ID" value="ABJ61350"/>
    <property type="gene ID" value="LEUM_0219"/>
</dbReference>
<dbReference type="GeneID" id="97504958"/>
<dbReference type="KEGG" id="lme:LEUM_0219"/>
<dbReference type="eggNOG" id="COG0099">
    <property type="taxonomic scope" value="Bacteria"/>
</dbReference>
<dbReference type="HOGENOM" id="CLU_103849_1_1_9"/>
<dbReference type="Proteomes" id="UP000000362">
    <property type="component" value="Chromosome"/>
</dbReference>
<dbReference type="GO" id="GO:0005829">
    <property type="term" value="C:cytosol"/>
    <property type="evidence" value="ECO:0007669"/>
    <property type="project" value="TreeGrafter"/>
</dbReference>
<dbReference type="GO" id="GO:0015935">
    <property type="term" value="C:small ribosomal subunit"/>
    <property type="evidence" value="ECO:0007669"/>
    <property type="project" value="TreeGrafter"/>
</dbReference>
<dbReference type="GO" id="GO:0019843">
    <property type="term" value="F:rRNA binding"/>
    <property type="evidence" value="ECO:0007669"/>
    <property type="project" value="UniProtKB-UniRule"/>
</dbReference>
<dbReference type="GO" id="GO:0003735">
    <property type="term" value="F:structural constituent of ribosome"/>
    <property type="evidence" value="ECO:0007669"/>
    <property type="project" value="InterPro"/>
</dbReference>
<dbReference type="GO" id="GO:0000049">
    <property type="term" value="F:tRNA binding"/>
    <property type="evidence" value="ECO:0007669"/>
    <property type="project" value="UniProtKB-UniRule"/>
</dbReference>
<dbReference type="GO" id="GO:0006412">
    <property type="term" value="P:translation"/>
    <property type="evidence" value="ECO:0007669"/>
    <property type="project" value="UniProtKB-UniRule"/>
</dbReference>
<dbReference type="FunFam" id="1.10.8.50:FF:000001">
    <property type="entry name" value="30S ribosomal protein S13"/>
    <property type="match status" value="1"/>
</dbReference>
<dbReference type="FunFam" id="4.10.910.10:FF:000001">
    <property type="entry name" value="30S ribosomal protein S13"/>
    <property type="match status" value="1"/>
</dbReference>
<dbReference type="Gene3D" id="1.10.8.50">
    <property type="match status" value="1"/>
</dbReference>
<dbReference type="Gene3D" id="4.10.910.10">
    <property type="entry name" value="30s ribosomal protein s13, domain 2"/>
    <property type="match status" value="1"/>
</dbReference>
<dbReference type="HAMAP" id="MF_01315">
    <property type="entry name" value="Ribosomal_uS13"/>
    <property type="match status" value="1"/>
</dbReference>
<dbReference type="InterPro" id="IPR027437">
    <property type="entry name" value="Rbsml_uS13_C"/>
</dbReference>
<dbReference type="InterPro" id="IPR001892">
    <property type="entry name" value="Ribosomal_uS13"/>
</dbReference>
<dbReference type="InterPro" id="IPR010979">
    <property type="entry name" value="Ribosomal_uS13-like_H2TH"/>
</dbReference>
<dbReference type="InterPro" id="IPR019980">
    <property type="entry name" value="Ribosomal_uS13_bac-type"/>
</dbReference>
<dbReference type="InterPro" id="IPR018269">
    <property type="entry name" value="Ribosomal_uS13_CS"/>
</dbReference>
<dbReference type="NCBIfam" id="TIGR03631">
    <property type="entry name" value="uS13_bact"/>
    <property type="match status" value="1"/>
</dbReference>
<dbReference type="PANTHER" id="PTHR10871">
    <property type="entry name" value="30S RIBOSOMAL PROTEIN S13/40S RIBOSOMAL PROTEIN S18"/>
    <property type="match status" value="1"/>
</dbReference>
<dbReference type="PANTHER" id="PTHR10871:SF1">
    <property type="entry name" value="SMALL RIBOSOMAL SUBUNIT PROTEIN US13M"/>
    <property type="match status" value="1"/>
</dbReference>
<dbReference type="Pfam" id="PF00416">
    <property type="entry name" value="Ribosomal_S13"/>
    <property type="match status" value="1"/>
</dbReference>
<dbReference type="PIRSF" id="PIRSF002134">
    <property type="entry name" value="Ribosomal_S13"/>
    <property type="match status" value="1"/>
</dbReference>
<dbReference type="SUPFAM" id="SSF46946">
    <property type="entry name" value="S13-like H2TH domain"/>
    <property type="match status" value="1"/>
</dbReference>
<dbReference type="PROSITE" id="PS00646">
    <property type="entry name" value="RIBOSOMAL_S13_1"/>
    <property type="match status" value="1"/>
</dbReference>
<dbReference type="PROSITE" id="PS50159">
    <property type="entry name" value="RIBOSOMAL_S13_2"/>
    <property type="match status" value="1"/>
</dbReference>
<feature type="chain" id="PRO_0000306637" description="Small ribosomal subunit protein uS13">
    <location>
        <begin position="1"/>
        <end position="123"/>
    </location>
</feature>
<feature type="region of interest" description="Disordered" evidence="2">
    <location>
        <begin position="93"/>
        <end position="123"/>
    </location>
</feature>
<feature type="compositionally biased region" description="Basic residues" evidence="2">
    <location>
        <begin position="108"/>
        <end position="123"/>
    </location>
</feature>
<organism>
    <name type="scientific">Leuconostoc mesenteroides subsp. mesenteroides (strain ATCC 8293 / DSM 20343 / BCRC 11652 / CCM 1803 / JCM 6124 / NCDO 523 / NBRC 100496 / NCIMB 8023 / NCTC 12954 / NRRL B-1118 / 37Y)</name>
    <dbReference type="NCBI Taxonomy" id="203120"/>
    <lineage>
        <taxon>Bacteria</taxon>
        <taxon>Bacillati</taxon>
        <taxon>Bacillota</taxon>
        <taxon>Bacilli</taxon>
        <taxon>Lactobacillales</taxon>
        <taxon>Lactobacillaceae</taxon>
        <taxon>Leuconostoc</taxon>
    </lineage>
</organism>
<reference key="1">
    <citation type="journal article" date="2006" name="Proc. Natl. Acad. Sci. U.S.A.">
        <title>Comparative genomics of the lactic acid bacteria.</title>
        <authorList>
            <person name="Makarova K.S."/>
            <person name="Slesarev A."/>
            <person name="Wolf Y.I."/>
            <person name="Sorokin A."/>
            <person name="Mirkin B."/>
            <person name="Koonin E.V."/>
            <person name="Pavlov A."/>
            <person name="Pavlova N."/>
            <person name="Karamychev V."/>
            <person name="Polouchine N."/>
            <person name="Shakhova V."/>
            <person name="Grigoriev I."/>
            <person name="Lou Y."/>
            <person name="Rohksar D."/>
            <person name="Lucas S."/>
            <person name="Huang K."/>
            <person name="Goodstein D.M."/>
            <person name="Hawkins T."/>
            <person name="Plengvidhya V."/>
            <person name="Welker D."/>
            <person name="Hughes J."/>
            <person name="Goh Y."/>
            <person name="Benson A."/>
            <person name="Baldwin K."/>
            <person name="Lee J.-H."/>
            <person name="Diaz-Muniz I."/>
            <person name="Dosti B."/>
            <person name="Smeianov V."/>
            <person name="Wechter W."/>
            <person name="Barabote R."/>
            <person name="Lorca G."/>
            <person name="Altermann E."/>
            <person name="Barrangou R."/>
            <person name="Ganesan B."/>
            <person name="Xie Y."/>
            <person name="Rawsthorne H."/>
            <person name="Tamir D."/>
            <person name="Parker C."/>
            <person name="Breidt F."/>
            <person name="Broadbent J.R."/>
            <person name="Hutkins R."/>
            <person name="O'Sullivan D."/>
            <person name="Steele J."/>
            <person name="Unlu G."/>
            <person name="Saier M.H. Jr."/>
            <person name="Klaenhammer T."/>
            <person name="Richardson P."/>
            <person name="Kozyavkin S."/>
            <person name="Weimer B.C."/>
            <person name="Mills D.A."/>
        </authorList>
    </citation>
    <scope>NUCLEOTIDE SEQUENCE [LARGE SCALE GENOMIC DNA]</scope>
    <source>
        <strain>ATCC 8293 / DSM 20343 / BCRC 11652 / CCM 1803 / JCM 6124 / NCDO 523 / NBRC 100496 / NCIMB 8023 / NCTC 12954 / NRRL B-1118 / 37Y</strain>
    </source>
</reference>
<sequence>MARIAGIDLPRDKRIVIGLTYIYGIGNTTAQKVLAEAGVSEDVRVRDLTSDQEDAIRATVDKLNLQLEGDLRRKVSLDIKSLQEIASYRGIRHRKGLPVRGQNTKNNARTRKGPAKAIAGKKK</sequence>
<accession>Q03ZM2</accession>
<protein>
    <recommendedName>
        <fullName evidence="1">Small ribosomal subunit protein uS13</fullName>
    </recommendedName>
    <alternativeName>
        <fullName evidence="3">30S ribosomal protein S13</fullName>
    </alternativeName>
</protein>
<comment type="function">
    <text evidence="1">Located at the top of the head of the 30S subunit, it contacts several helices of the 16S rRNA. In the 70S ribosome it contacts the 23S rRNA (bridge B1a) and protein L5 of the 50S subunit (bridge B1b), connecting the 2 subunits; these bridges are implicated in subunit movement. Contacts the tRNAs in the A and P-sites.</text>
</comment>
<comment type="subunit">
    <text evidence="1">Part of the 30S ribosomal subunit. Forms a loose heterodimer with protein S19. Forms two bridges to the 50S subunit in the 70S ribosome.</text>
</comment>
<comment type="similarity">
    <text evidence="1">Belongs to the universal ribosomal protein uS13 family.</text>
</comment>
<name>RS13_LEUMM</name>
<keyword id="KW-1185">Reference proteome</keyword>
<keyword id="KW-0687">Ribonucleoprotein</keyword>
<keyword id="KW-0689">Ribosomal protein</keyword>
<keyword id="KW-0694">RNA-binding</keyword>
<keyword id="KW-0699">rRNA-binding</keyword>
<keyword id="KW-0820">tRNA-binding</keyword>
<proteinExistence type="inferred from homology"/>
<gene>
    <name evidence="1" type="primary">rpsM</name>
    <name type="ordered locus">LEUM_0219</name>
</gene>